<sequence>MAKITKTFQYGKHTVTLETGEIARQAGGAVIVKFDDTVLLVSAVAAKSAREGQDFFPLTCDYQEKFYAGGRIPGGFFKREGRATEKETLISRLIDRPIRPLFPEDYKNEVQIIATVMSLNPEIDGDIPALIGASAALSLAGTPFKGPIAAAKVGYKDGEYILNPTVSELKESQLELVVAGTANAVLMVESEAALLSEDVMLGAVTFGHREMQKVINAINELTVEAGTKPSTWEAPAKNTALISAVQEAVGPRLGEAFQVRDKLQRRDAISAIKKDVVESLAGRVAAEGWNPAELSKEFGELEYSTMRNSVLDTKVRIDGRALDTVRPIAVKTSVLPRTHGSSLFTRGETQAIVTITLGTARDGQVIDAVSGEYKENFLFHYNFPPYSVGETGRMMGPKRREIGHGRLAKRGVLAVMPSLESFPYTIRVVSEITESNGSSSMASVCGSSLALMDAGVPVKAPVAGIAMGLVKEGDRFVVLSDILGDEDHLGDMDFKVAGTAEGISALQMDIKIEGITEEIMKQALQQAKAGRLHILGEMAHGLTAPREELSDYAPRLLTIKIHPDKIREVIGKGGSTIQAITKETGTQIDIQDDGTIVIASVNAIAAQAAKARIEQITSDVEPGRIYEGKVAKIMDFGAFVTILPGKDGLVHVSQISSDRVEKVGDVLKEGDVVKVKVLEVDKQGRIRLSMKAVEEGEGASAE</sequence>
<proteinExistence type="inferred from homology"/>
<comment type="function">
    <text evidence="1">Involved in mRNA degradation. Catalyzes the phosphorolysis of single-stranded polyribonucleotides processively in the 3'- to 5'-direction.</text>
</comment>
<comment type="catalytic activity">
    <reaction evidence="1">
        <text>RNA(n+1) + phosphate = RNA(n) + a ribonucleoside 5'-diphosphate</text>
        <dbReference type="Rhea" id="RHEA:22096"/>
        <dbReference type="Rhea" id="RHEA-COMP:14527"/>
        <dbReference type="Rhea" id="RHEA-COMP:17342"/>
        <dbReference type="ChEBI" id="CHEBI:43474"/>
        <dbReference type="ChEBI" id="CHEBI:57930"/>
        <dbReference type="ChEBI" id="CHEBI:140395"/>
        <dbReference type="EC" id="2.7.7.8"/>
    </reaction>
</comment>
<comment type="cofactor">
    <cofactor evidence="1">
        <name>Mg(2+)</name>
        <dbReference type="ChEBI" id="CHEBI:18420"/>
    </cofactor>
</comment>
<comment type="subunit">
    <text evidence="1">Component of the RNA degradosome, which is a multiprotein complex involved in RNA processing and mRNA degradation.</text>
</comment>
<comment type="subcellular location">
    <subcellularLocation>
        <location evidence="1">Cytoplasm</location>
    </subcellularLocation>
</comment>
<comment type="similarity">
    <text evidence="1">Belongs to the polyribonucleotide nucleotidyltransferase family.</text>
</comment>
<accession>B4SQR6</accession>
<keyword id="KW-0963">Cytoplasm</keyword>
<keyword id="KW-0460">Magnesium</keyword>
<keyword id="KW-0479">Metal-binding</keyword>
<keyword id="KW-0548">Nucleotidyltransferase</keyword>
<keyword id="KW-0694">RNA-binding</keyword>
<keyword id="KW-0808">Transferase</keyword>
<gene>
    <name evidence="1" type="primary">pnp</name>
    <name type="ordered locus">Smal_2811</name>
</gene>
<feature type="chain" id="PRO_1000192494" description="Polyribonucleotide nucleotidyltransferase">
    <location>
        <begin position="1"/>
        <end position="702"/>
    </location>
</feature>
<feature type="domain" description="KH" evidence="1">
    <location>
        <begin position="554"/>
        <end position="613"/>
    </location>
</feature>
<feature type="domain" description="S1 motif" evidence="1">
    <location>
        <begin position="623"/>
        <end position="691"/>
    </location>
</feature>
<feature type="binding site" evidence="1">
    <location>
        <position position="487"/>
    </location>
    <ligand>
        <name>Mg(2+)</name>
        <dbReference type="ChEBI" id="CHEBI:18420"/>
    </ligand>
</feature>
<feature type="binding site" evidence="1">
    <location>
        <position position="493"/>
    </location>
    <ligand>
        <name>Mg(2+)</name>
        <dbReference type="ChEBI" id="CHEBI:18420"/>
    </ligand>
</feature>
<organism>
    <name type="scientific">Stenotrophomonas maltophilia (strain R551-3)</name>
    <dbReference type="NCBI Taxonomy" id="391008"/>
    <lineage>
        <taxon>Bacteria</taxon>
        <taxon>Pseudomonadati</taxon>
        <taxon>Pseudomonadota</taxon>
        <taxon>Gammaproteobacteria</taxon>
        <taxon>Lysobacterales</taxon>
        <taxon>Lysobacteraceae</taxon>
        <taxon>Stenotrophomonas</taxon>
        <taxon>Stenotrophomonas maltophilia group</taxon>
    </lineage>
</organism>
<reference key="1">
    <citation type="submission" date="2008-06" db="EMBL/GenBank/DDBJ databases">
        <title>Complete sequence of Stenotrophomonas maltophilia R551-3.</title>
        <authorList>
            <consortium name="US DOE Joint Genome Institute"/>
            <person name="Lucas S."/>
            <person name="Copeland A."/>
            <person name="Lapidus A."/>
            <person name="Glavina del Rio T."/>
            <person name="Dalin E."/>
            <person name="Tice H."/>
            <person name="Pitluck S."/>
            <person name="Chain P."/>
            <person name="Malfatti S."/>
            <person name="Shin M."/>
            <person name="Vergez L."/>
            <person name="Lang D."/>
            <person name="Schmutz J."/>
            <person name="Larimer F."/>
            <person name="Land M."/>
            <person name="Hauser L."/>
            <person name="Kyrpides N."/>
            <person name="Mikhailova N."/>
            <person name="Taghavi S."/>
            <person name="Monchy S."/>
            <person name="Newman L."/>
            <person name="Vangronsveld J."/>
            <person name="van der Lelie D."/>
            <person name="Richardson P."/>
        </authorList>
    </citation>
    <scope>NUCLEOTIDE SEQUENCE [LARGE SCALE GENOMIC DNA]</scope>
    <source>
        <strain>R551-3</strain>
    </source>
</reference>
<protein>
    <recommendedName>
        <fullName evidence="1">Polyribonucleotide nucleotidyltransferase</fullName>
        <ecNumber evidence="1">2.7.7.8</ecNumber>
    </recommendedName>
    <alternativeName>
        <fullName evidence="1">Polynucleotide phosphorylase</fullName>
        <shortName evidence="1">PNPase</shortName>
    </alternativeName>
</protein>
<name>PNP_STRM5</name>
<evidence type="ECO:0000255" key="1">
    <source>
        <dbReference type="HAMAP-Rule" id="MF_01595"/>
    </source>
</evidence>
<dbReference type="EC" id="2.7.7.8" evidence="1"/>
<dbReference type="EMBL" id="CP001111">
    <property type="protein sequence ID" value="ACF52511.1"/>
    <property type="molecule type" value="Genomic_DNA"/>
</dbReference>
<dbReference type="RefSeq" id="WP_012511700.1">
    <property type="nucleotide sequence ID" value="NC_011071.1"/>
</dbReference>
<dbReference type="SMR" id="B4SQR6"/>
<dbReference type="STRING" id="391008.Smal_2811"/>
<dbReference type="KEGG" id="smt:Smal_2811"/>
<dbReference type="eggNOG" id="COG1185">
    <property type="taxonomic scope" value="Bacteria"/>
</dbReference>
<dbReference type="HOGENOM" id="CLU_004217_2_2_6"/>
<dbReference type="OrthoDB" id="9804305at2"/>
<dbReference type="Proteomes" id="UP000001867">
    <property type="component" value="Chromosome"/>
</dbReference>
<dbReference type="GO" id="GO:0005829">
    <property type="term" value="C:cytosol"/>
    <property type="evidence" value="ECO:0007669"/>
    <property type="project" value="TreeGrafter"/>
</dbReference>
<dbReference type="GO" id="GO:0000175">
    <property type="term" value="F:3'-5'-RNA exonuclease activity"/>
    <property type="evidence" value="ECO:0007669"/>
    <property type="project" value="TreeGrafter"/>
</dbReference>
<dbReference type="GO" id="GO:0000287">
    <property type="term" value="F:magnesium ion binding"/>
    <property type="evidence" value="ECO:0007669"/>
    <property type="project" value="UniProtKB-UniRule"/>
</dbReference>
<dbReference type="GO" id="GO:0004654">
    <property type="term" value="F:polyribonucleotide nucleotidyltransferase activity"/>
    <property type="evidence" value="ECO:0007669"/>
    <property type="project" value="UniProtKB-UniRule"/>
</dbReference>
<dbReference type="GO" id="GO:0003723">
    <property type="term" value="F:RNA binding"/>
    <property type="evidence" value="ECO:0007669"/>
    <property type="project" value="UniProtKB-UniRule"/>
</dbReference>
<dbReference type="GO" id="GO:0006402">
    <property type="term" value="P:mRNA catabolic process"/>
    <property type="evidence" value="ECO:0007669"/>
    <property type="project" value="UniProtKB-UniRule"/>
</dbReference>
<dbReference type="GO" id="GO:0006396">
    <property type="term" value="P:RNA processing"/>
    <property type="evidence" value="ECO:0007669"/>
    <property type="project" value="InterPro"/>
</dbReference>
<dbReference type="CDD" id="cd02393">
    <property type="entry name" value="KH-I_PNPase"/>
    <property type="match status" value="1"/>
</dbReference>
<dbReference type="CDD" id="cd11363">
    <property type="entry name" value="RNase_PH_PNPase_1"/>
    <property type="match status" value="1"/>
</dbReference>
<dbReference type="CDD" id="cd11364">
    <property type="entry name" value="RNase_PH_PNPase_2"/>
    <property type="match status" value="1"/>
</dbReference>
<dbReference type="CDD" id="cd04472">
    <property type="entry name" value="S1_PNPase"/>
    <property type="match status" value="1"/>
</dbReference>
<dbReference type="FunFam" id="2.40.50.140:FF:000023">
    <property type="entry name" value="Polyribonucleotide nucleotidyltransferase"/>
    <property type="match status" value="1"/>
</dbReference>
<dbReference type="FunFam" id="3.30.1370.10:FF:000001">
    <property type="entry name" value="Polyribonucleotide nucleotidyltransferase"/>
    <property type="match status" value="1"/>
</dbReference>
<dbReference type="FunFam" id="3.30.230.70:FF:000001">
    <property type="entry name" value="Polyribonucleotide nucleotidyltransferase"/>
    <property type="match status" value="1"/>
</dbReference>
<dbReference type="FunFam" id="3.30.230.70:FF:000002">
    <property type="entry name" value="Polyribonucleotide nucleotidyltransferase"/>
    <property type="match status" value="1"/>
</dbReference>
<dbReference type="Gene3D" id="3.30.230.70">
    <property type="entry name" value="GHMP Kinase, N-terminal domain"/>
    <property type="match status" value="2"/>
</dbReference>
<dbReference type="Gene3D" id="3.30.1370.10">
    <property type="entry name" value="K Homology domain, type 1"/>
    <property type="match status" value="1"/>
</dbReference>
<dbReference type="Gene3D" id="2.40.50.140">
    <property type="entry name" value="Nucleic acid-binding proteins"/>
    <property type="match status" value="1"/>
</dbReference>
<dbReference type="HAMAP" id="MF_01595">
    <property type="entry name" value="PNPase"/>
    <property type="match status" value="1"/>
</dbReference>
<dbReference type="InterPro" id="IPR001247">
    <property type="entry name" value="ExoRNase_PH_dom1"/>
</dbReference>
<dbReference type="InterPro" id="IPR015847">
    <property type="entry name" value="ExoRNase_PH_dom2"/>
</dbReference>
<dbReference type="InterPro" id="IPR036345">
    <property type="entry name" value="ExoRNase_PH_dom2_sf"/>
</dbReference>
<dbReference type="InterPro" id="IPR004087">
    <property type="entry name" value="KH_dom"/>
</dbReference>
<dbReference type="InterPro" id="IPR004088">
    <property type="entry name" value="KH_dom_type_1"/>
</dbReference>
<dbReference type="InterPro" id="IPR036612">
    <property type="entry name" value="KH_dom_type_1_sf"/>
</dbReference>
<dbReference type="InterPro" id="IPR012340">
    <property type="entry name" value="NA-bd_OB-fold"/>
</dbReference>
<dbReference type="InterPro" id="IPR012162">
    <property type="entry name" value="PNPase"/>
</dbReference>
<dbReference type="InterPro" id="IPR027408">
    <property type="entry name" value="PNPase/RNase_PH_dom_sf"/>
</dbReference>
<dbReference type="InterPro" id="IPR015848">
    <property type="entry name" value="PNPase_PH_RNA-bd_bac/org-type"/>
</dbReference>
<dbReference type="InterPro" id="IPR036456">
    <property type="entry name" value="PNPase_PH_RNA-bd_sf"/>
</dbReference>
<dbReference type="InterPro" id="IPR020568">
    <property type="entry name" value="Ribosomal_Su5_D2-typ_SF"/>
</dbReference>
<dbReference type="InterPro" id="IPR003029">
    <property type="entry name" value="S1_domain"/>
</dbReference>
<dbReference type="NCBIfam" id="TIGR03591">
    <property type="entry name" value="polynuc_phos"/>
    <property type="match status" value="1"/>
</dbReference>
<dbReference type="NCBIfam" id="NF008805">
    <property type="entry name" value="PRK11824.1"/>
    <property type="match status" value="1"/>
</dbReference>
<dbReference type="PANTHER" id="PTHR11252">
    <property type="entry name" value="POLYRIBONUCLEOTIDE NUCLEOTIDYLTRANSFERASE"/>
    <property type="match status" value="1"/>
</dbReference>
<dbReference type="PANTHER" id="PTHR11252:SF0">
    <property type="entry name" value="POLYRIBONUCLEOTIDE NUCLEOTIDYLTRANSFERASE 1, MITOCHONDRIAL"/>
    <property type="match status" value="1"/>
</dbReference>
<dbReference type="Pfam" id="PF00013">
    <property type="entry name" value="KH_1"/>
    <property type="match status" value="1"/>
</dbReference>
<dbReference type="Pfam" id="PF03726">
    <property type="entry name" value="PNPase"/>
    <property type="match status" value="1"/>
</dbReference>
<dbReference type="Pfam" id="PF01138">
    <property type="entry name" value="RNase_PH"/>
    <property type="match status" value="2"/>
</dbReference>
<dbReference type="Pfam" id="PF03725">
    <property type="entry name" value="RNase_PH_C"/>
    <property type="match status" value="2"/>
</dbReference>
<dbReference type="Pfam" id="PF00575">
    <property type="entry name" value="S1"/>
    <property type="match status" value="1"/>
</dbReference>
<dbReference type="PIRSF" id="PIRSF005499">
    <property type="entry name" value="PNPase"/>
    <property type="match status" value="1"/>
</dbReference>
<dbReference type="SMART" id="SM00322">
    <property type="entry name" value="KH"/>
    <property type="match status" value="1"/>
</dbReference>
<dbReference type="SMART" id="SM00316">
    <property type="entry name" value="S1"/>
    <property type="match status" value="1"/>
</dbReference>
<dbReference type="SUPFAM" id="SSF54791">
    <property type="entry name" value="Eukaryotic type KH-domain (KH-domain type I)"/>
    <property type="match status" value="1"/>
</dbReference>
<dbReference type="SUPFAM" id="SSF50249">
    <property type="entry name" value="Nucleic acid-binding proteins"/>
    <property type="match status" value="1"/>
</dbReference>
<dbReference type="SUPFAM" id="SSF46915">
    <property type="entry name" value="Polynucleotide phosphorylase/guanosine pentaphosphate synthase (PNPase/GPSI), domain 3"/>
    <property type="match status" value="1"/>
</dbReference>
<dbReference type="SUPFAM" id="SSF55666">
    <property type="entry name" value="Ribonuclease PH domain 2-like"/>
    <property type="match status" value="2"/>
</dbReference>
<dbReference type="SUPFAM" id="SSF54211">
    <property type="entry name" value="Ribosomal protein S5 domain 2-like"/>
    <property type="match status" value="2"/>
</dbReference>
<dbReference type="PROSITE" id="PS50084">
    <property type="entry name" value="KH_TYPE_1"/>
    <property type="match status" value="1"/>
</dbReference>
<dbReference type="PROSITE" id="PS50126">
    <property type="entry name" value="S1"/>
    <property type="match status" value="1"/>
</dbReference>